<comment type="function">
    <text evidence="1">Binds to 23S rRNA. Forms part of two intersubunit bridges in the 70S ribosome.</text>
</comment>
<comment type="subunit">
    <text evidence="1">Part of the 50S ribosomal subunit. Forms a cluster with proteins L3 and L19. In the 70S ribosome, L14 and L19 interact and together make contacts with the 16S rRNA in bridges B5 and B8.</text>
</comment>
<comment type="similarity">
    <text evidence="1">Belongs to the universal ribosomal protein uL14 family.</text>
</comment>
<evidence type="ECO:0000255" key="1">
    <source>
        <dbReference type="HAMAP-Rule" id="MF_01367"/>
    </source>
</evidence>
<evidence type="ECO:0000305" key="2"/>
<proteinExistence type="inferred from homology"/>
<feature type="chain" id="PRO_1000055636" description="Large ribosomal subunit protein uL14">
    <location>
        <begin position="1"/>
        <end position="122"/>
    </location>
</feature>
<accession>A0QL02</accession>
<name>RL14_MYCA1</name>
<organism>
    <name type="scientific">Mycobacterium avium (strain 104)</name>
    <dbReference type="NCBI Taxonomy" id="243243"/>
    <lineage>
        <taxon>Bacteria</taxon>
        <taxon>Bacillati</taxon>
        <taxon>Actinomycetota</taxon>
        <taxon>Actinomycetes</taxon>
        <taxon>Mycobacteriales</taxon>
        <taxon>Mycobacteriaceae</taxon>
        <taxon>Mycobacterium</taxon>
        <taxon>Mycobacterium avium complex (MAC)</taxon>
    </lineage>
</organism>
<keyword id="KW-0687">Ribonucleoprotein</keyword>
<keyword id="KW-0689">Ribosomal protein</keyword>
<keyword id="KW-0694">RNA-binding</keyword>
<keyword id="KW-0699">rRNA-binding</keyword>
<gene>
    <name evidence="1" type="primary">rplN</name>
    <name type="ordered locus">MAV_4455</name>
</gene>
<protein>
    <recommendedName>
        <fullName evidence="1">Large ribosomal subunit protein uL14</fullName>
    </recommendedName>
    <alternativeName>
        <fullName evidence="2">50S ribosomal protein L14</fullName>
    </alternativeName>
</protein>
<reference key="1">
    <citation type="submission" date="2006-10" db="EMBL/GenBank/DDBJ databases">
        <authorList>
            <person name="Fleischmann R.D."/>
            <person name="Dodson R.J."/>
            <person name="Haft D.H."/>
            <person name="Merkel J.S."/>
            <person name="Nelson W.C."/>
            <person name="Fraser C.M."/>
        </authorList>
    </citation>
    <scope>NUCLEOTIDE SEQUENCE [LARGE SCALE GENOMIC DNA]</scope>
    <source>
        <strain>104</strain>
    </source>
</reference>
<sequence>MIQQESRLKVADNTGAKEILCIRVLGGSSRRYAGIGDVIVATVKDAIPGGNVKRGDVVKAVVVRTVKERRRPDGSYIKFDENAAVIIKPDNDPRGTRIFGPVGRELREKRFMKIISLAPEVL</sequence>
<dbReference type="EMBL" id="CP000479">
    <property type="protein sequence ID" value="ABK67753.1"/>
    <property type="molecule type" value="Genomic_DNA"/>
</dbReference>
<dbReference type="RefSeq" id="WP_003403649.1">
    <property type="nucleotide sequence ID" value="NC_008595.1"/>
</dbReference>
<dbReference type="SMR" id="A0QL02"/>
<dbReference type="GeneID" id="93493169"/>
<dbReference type="KEGG" id="mav:MAV_4455"/>
<dbReference type="HOGENOM" id="CLU_095071_2_1_11"/>
<dbReference type="Proteomes" id="UP000001574">
    <property type="component" value="Chromosome"/>
</dbReference>
<dbReference type="GO" id="GO:0022625">
    <property type="term" value="C:cytosolic large ribosomal subunit"/>
    <property type="evidence" value="ECO:0007669"/>
    <property type="project" value="TreeGrafter"/>
</dbReference>
<dbReference type="GO" id="GO:0070180">
    <property type="term" value="F:large ribosomal subunit rRNA binding"/>
    <property type="evidence" value="ECO:0007669"/>
    <property type="project" value="TreeGrafter"/>
</dbReference>
<dbReference type="GO" id="GO:0003735">
    <property type="term" value="F:structural constituent of ribosome"/>
    <property type="evidence" value="ECO:0007669"/>
    <property type="project" value="InterPro"/>
</dbReference>
<dbReference type="GO" id="GO:0006412">
    <property type="term" value="P:translation"/>
    <property type="evidence" value="ECO:0007669"/>
    <property type="project" value="UniProtKB-UniRule"/>
</dbReference>
<dbReference type="CDD" id="cd00337">
    <property type="entry name" value="Ribosomal_uL14"/>
    <property type="match status" value="1"/>
</dbReference>
<dbReference type="FunFam" id="2.40.150.20:FF:000001">
    <property type="entry name" value="50S ribosomal protein L14"/>
    <property type="match status" value="1"/>
</dbReference>
<dbReference type="Gene3D" id="2.40.150.20">
    <property type="entry name" value="Ribosomal protein L14"/>
    <property type="match status" value="1"/>
</dbReference>
<dbReference type="HAMAP" id="MF_01367">
    <property type="entry name" value="Ribosomal_uL14"/>
    <property type="match status" value="1"/>
</dbReference>
<dbReference type="InterPro" id="IPR000218">
    <property type="entry name" value="Ribosomal_uL14"/>
</dbReference>
<dbReference type="InterPro" id="IPR005745">
    <property type="entry name" value="Ribosomal_uL14_bac-type"/>
</dbReference>
<dbReference type="InterPro" id="IPR019972">
    <property type="entry name" value="Ribosomal_uL14_CS"/>
</dbReference>
<dbReference type="InterPro" id="IPR036853">
    <property type="entry name" value="Ribosomal_uL14_sf"/>
</dbReference>
<dbReference type="NCBIfam" id="TIGR01067">
    <property type="entry name" value="rplN_bact"/>
    <property type="match status" value="1"/>
</dbReference>
<dbReference type="PANTHER" id="PTHR11761">
    <property type="entry name" value="50S/60S RIBOSOMAL PROTEIN L14/L23"/>
    <property type="match status" value="1"/>
</dbReference>
<dbReference type="PANTHER" id="PTHR11761:SF3">
    <property type="entry name" value="LARGE RIBOSOMAL SUBUNIT PROTEIN UL14M"/>
    <property type="match status" value="1"/>
</dbReference>
<dbReference type="Pfam" id="PF00238">
    <property type="entry name" value="Ribosomal_L14"/>
    <property type="match status" value="1"/>
</dbReference>
<dbReference type="SMART" id="SM01374">
    <property type="entry name" value="Ribosomal_L14"/>
    <property type="match status" value="1"/>
</dbReference>
<dbReference type="SUPFAM" id="SSF50193">
    <property type="entry name" value="Ribosomal protein L14"/>
    <property type="match status" value="1"/>
</dbReference>
<dbReference type="PROSITE" id="PS00049">
    <property type="entry name" value="RIBOSOMAL_L14"/>
    <property type="match status" value="1"/>
</dbReference>